<keyword id="KW-0158">Chromosome</keyword>
<keyword id="KW-0217">Developmental protein</keyword>
<keyword id="KW-0221">Differentiation</keyword>
<keyword id="KW-1015">Disulfide bond</keyword>
<keyword id="KW-0226">DNA condensation</keyword>
<keyword id="KW-0238">DNA-binding</keyword>
<keyword id="KW-0544">Nucleosome core</keyword>
<keyword id="KW-0539">Nucleus</keyword>
<keyword id="KW-0744">Spermatogenesis</keyword>
<feature type="chain" id="PRO_0000191483" description="Sperm protamine P1">
    <location>
        <begin position="1"/>
        <end position="51"/>
    </location>
</feature>
<protein>
    <recommendedName>
        <fullName>Sperm protamine P1</fullName>
    </recommendedName>
    <alternativeName>
        <fullName>Cysteine-rich protamine</fullName>
    </alternativeName>
</protein>
<comment type="function">
    <text>Protamines substitute for histones in the chromatin of sperm during the haploid phase of spermatogenesis. They compact sperm DNA into a highly condensed, stable and inactive complex.</text>
</comment>
<comment type="subunit">
    <text evidence="1">Cross-linked by interchain disulfide bonds around the DNA-helix.</text>
</comment>
<comment type="subcellular location">
    <subcellularLocation>
        <location>Nucleus</location>
    </subcellularLocation>
    <subcellularLocation>
        <location>Chromosome</location>
    </subcellularLocation>
</comment>
<comment type="tissue specificity">
    <text>Testis.</text>
</comment>
<comment type="similarity">
    <text evidence="2">Belongs to the protamine P1 family.</text>
</comment>
<dbReference type="EMBL" id="L14588">
    <property type="protein sequence ID" value="AAA51527.1"/>
    <property type="molecule type" value="Genomic_DNA"/>
</dbReference>
<dbReference type="GO" id="GO:0000786">
    <property type="term" value="C:nucleosome"/>
    <property type="evidence" value="ECO:0007669"/>
    <property type="project" value="UniProtKB-KW"/>
</dbReference>
<dbReference type="GO" id="GO:0005634">
    <property type="term" value="C:nucleus"/>
    <property type="evidence" value="ECO:0007669"/>
    <property type="project" value="UniProtKB-SubCell"/>
</dbReference>
<dbReference type="GO" id="GO:0003677">
    <property type="term" value="F:DNA binding"/>
    <property type="evidence" value="ECO:0007669"/>
    <property type="project" value="UniProtKB-KW"/>
</dbReference>
<dbReference type="GO" id="GO:0030261">
    <property type="term" value="P:chromosome condensation"/>
    <property type="evidence" value="ECO:0007669"/>
    <property type="project" value="UniProtKB-KW"/>
</dbReference>
<dbReference type="GO" id="GO:0035092">
    <property type="term" value="P:sperm DNA condensation"/>
    <property type="evidence" value="ECO:0007669"/>
    <property type="project" value="InterPro"/>
</dbReference>
<dbReference type="InterPro" id="IPR000221">
    <property type="entry name" value="Protamine_P1"/>
</dbReference>
<dbReference type="Pfam" id="PF00260">
    <property type="entry name" value="Protamine_P1"/>
    <property type="match status" value="1"/>
</dbReference>
<dbReference type="PROSITE" id="PS00048">
    <property type="entry name" value="PROTAMINE_P1"/>
    <property type="match status" value="1"/>
</dbReference>
<sequence>MARYRCCRSQSRSRCYRRGQRSRRRRRRSCQTRRRAMRCCRPRYRLRRRRH</sequence>
<proteinExistence type="evidence at transcript level"/>
<gene>
    <name type="primary">PRM1</name>
</gene>
<organism>
    <name type="scientific">Hylobates lar</name>
    <name type="common">Lar gibbon</name>
    <name type="synonym">White-handed gibbon</name>
    <dbReference type="NCBI Taxonomy" id="9580"/>
    <lineage>
        <taxon>Eukaryota</taxon>
        <taxon>Metazoa</taxon>
        <taxon>Chordata</taxon>
        <taxon>Craniata</taxon>
        <taxon>Vertebrata</taxon>
        <taxon>Euteleostomi</taxon>
        <taxon>Mammalia</taxon>
        <taxon>Eutheria</taxon>
        <taxon>Euarchontoglires</taxon>
        <taxon>Primates</taxon>
        <taxon>Haplorrhini</taxon>
        <taxon>Catarrhini</taxon>
        <taxon>Hylobatidae</taxon>
        <taxon>Hylobates</taxon>
    </lineage>
</organism>
<accession>P35306</accession>
<reference key="1">
    <citation type="journal article" date="1993" name="J. Mol. Evol.">
        <title>Evolution of protamine P1 genes in primates.</title>
        <authorList>
            <person name="Retief J.D."/>
            <person name="Winkfein R.J."/>
            <person name="Dixon G.H."/>
            <person name="Adroer R."/>
            <person name="Queralt R."/>
            <person name="Ballabriga J."/>
            <person name="Oliva R."/>
        </authorList>
    </citation>
    <scope>NUCLEOTIDE SEQUENCE [GENOMIC DNA]</scope>
</reference>
<evidence type="ECO:0000250" key="1"/>
<evidence type="ECO:0000305" key="2"/>
<name>HSP1_HYLLA</name>